<keyword id="KW-0963">Cytoplasm</keyword>
<keyword id="KW-0328">Glycosyltransferase</keyword>
<keyword id="KW-0660">Purine salvage</keyword>
<keyword id="KW-1185">Reference proteome</keyword>
<keyword id="KW-0808">Transferase</keyword>
<name>APT_GLOC7</name>
<comment type="function">
    <text evidence="1">Catalyzes a salvage reaction resulting in the formation of AMP, that is energically less costly than de novo synthesis.</text>
</comment>
<comment type="catalytic activity">
    <reaction evidence="1">
        <text>AMP + diphosphate = 5-phospho-alpha-D-ribose 1-diphosphate + adenine</text>
        <dbReference type="Rhea" id="RHEA:16609"/>
        <dbReference type="ChEBI" id="CHEBI:16708"/>
        <dbReference type="ChEBI" id="CHEBI:33019"/>
        <dbReference type="ChEBI" id="CHEBI:58017"/>
        <dbReference type="ChEBI" id="CHEBI:456215"/>
        <dbReference type="EC" id="2.4.2.7"/>
    </reaction>
</comment>
<comment type="pathway">
    <text evidence="1">Purine metabolism; AMP biosynthesis via salvage pathway; AMP from adenine: step 1/1.</text>
</comment>
<comment type="subunit">
    <text evidence="1">Homodimer.</text>
</comment>
<comment type="subcellular location">
    <subcellularLocation>
        <location evidence="1">Cytoplasm</location>
    </subcellularLocation>
</comment>
<comment type="similarity">
    <text evidence="1">Belongs to the purine/pyrimidine phosphoribosyltransferase family.</text>
</comment>
<proteinExistence type="inferred from homology"/>
<protein>
    <recommendedName>
        <fullName evidence="1">Adenine phosphoribosyltransferase</fullName>
        <shortName evidence="1">APRT</shortName>
        <ecNumber evidence="1">2.4.2.7</ecNumber>
    </recommendedName>
</protein>
<evidence type="ECO:0000255" key="1">
    <source>
        <dbReference type="HAMAP-Rule" id="MF_00004"/>
    </source>
</evidence>
<reference key="1">
    <citation type="journal article" date="2011" name="MBio">
        <title>Novel metabolic attributes of the genus Cyanothece, comprising a group of unicellular nitrogen-fixing Cyanobacteria.</title>
        <authorList>
            <person name="Bandyopadhyay A."/>
            <person name="Elvitigala T."/>
            <person name="Welsh E."/>
            <person name="Stockel J."/>
            <person name="Liberton M."/>
            <person name="Min H."/>
            <person name="Sherman L.A."/>
            <person name="Pakrasi H.B."/>
        </authorList>
    </citation>
    <scope>NUCLEOTIDE SEQUENCE [LARGE SCALE GENOMIC DNA]</scope>
    <source>
        <strain>PCC 7424</strain>
    </source>
</reference>
<dbReference type="EC" id="2.4.2.7" evidence="1"/>
<dbReference type="EMBL" id="CP001291">
    <property type="protein sequence ID" value="ACK71027.1"/>
    <property type="molecule type" value="Genomic_DNA"/>
</dbReference>
<dbReference type="RefSeq" id="WP_015954630.1">
    <property type="nucleotide sequence ID" value="NC_011729.1"/>
</dbReference>
<dbReference type="SMR" id="B7KKQ8"/>
<dbReference type="STRING" id="65393.PCC7424_2613"/>
<dbReference type="KEGG" id="cyc:PCC7424_2613"/>
<dbReference type="eggNOG" id="COG0503">
    <property type="taxonomic scope" value="Bacteria"/>
</dbReference>
<dbReference type="HOGENOM" id="CLU_063339_3_0_3"/>
<dbReference type="OrthoDB" id="9803963at2"/>
<dbReference type="UniPathway" id="UPA00588">
    <property type="reaction ID" value="UER00646"/>
</dbReference>
<dbReference type="Proteomes" id="UP000002384">
    <property type="component" value="Chromosome"/>
</dbReference>
<dbReference type="GO" id="GO:0005737">
    <property type="term" value="C:cytoplasm"/>
    <property type="evidence" value="ECO:0007669"/>
    <property type="project" value="UniProtKB-SubCell"/>
</dbReference>
<dbReference type="GO" id="GO:0002055">
    <property type="term" value="F:adenine binding"/>
    <property type="evidence" value="ECO:0007669"/>
    <property type="project" value="TreeGrafter"/>
</dbReference>
<dbReference type="GO" id="GO:0003999">
    <property type="term" value="F:adenine phosphoribosyltransferase activity"/>
    <property type="evidence" value="ECO:0007669"/>
    <property type="project" value="UniProtKB-UniRule"/>
</dbReference>
<dbReference type="GO" id="GO:0016208">
    <property type="term" value="F:AMP binding"/>
    <property type="evidence" value="ECO:0007669"/>
    <property type="project" value="TreeGrafter"/>
</dbReference>
<dbReference type="GO" id="GO:0006168">
    <property type="term" value="P:adenine salvage"/>
    <property type="evidence" value="ECO:0007669"/>
    <property type="project" value="InterPro"/>
</dbReference>
<dbReference type="GO" id="GO:0044209">
    <property type="term" value="P:AMP salvage"/>
    <property type="evidence" value="ECO:0007669"/>
    <property type="project" value="UniProtKB-UniRule"/>
</dbReference>
<dbReference type="GO" id="GO:0006166">
    <property type="term" value="P:purine ribonucleoside salvage"/>
    <property type="evidence" value="ECO:0007669"/>
    <property type="project" value="UniProtKB-KW"/>
</dbReference>
<dbReference type="CDD" id="cd06223">
    <property type="entry name" value="PRTases_typeI"/>
    <property type="match status" value="1"/>
</dbReference>
<dbReference type="FunFam" id="3.40.50.2020:FF:000004">
    <property type="entry name" value="Adenine phosphoribosyltransferase"/>
    <property type="match status" value="1"/>
</dbReference>
<dbReference type="Gene3D" id="3.40.50.2020">
    <property type="match status" value="1"/>
</dbReference>
<dbReference type="HAMAP" id="MF_00004">
    <property type="entry name" value="Aden_phosphoribosyltr"/>
    <property type="match status" value="1"/>
</dbReference>
<dbReference type="InterPro" id="IPR005764">
    <property type="entry name" value="Ade_phspho_trans"/>
</dbReference>
<dbReference type="InterPro" id="IPR000836">
    <property type="entry name" value="PRibTrfase_dom"/>
</dbReference>
<dbReference type="InterPro" id="IPR029057">
    <property type="entry name" value="PRTase-like"/>
</dbReference>
<dbReference type="InterPro" id="IPR050054">
    <property type="entry name" value="UPRTase/APRTase"/>
</dbReference>
<dbReference type="NCBIfam" id="TIGR01090">
    <property type="entry name" value="apt"/>
    <property type="match status" value="1"/>
</dbReference>
<dbReference type="NCBIfam" id="NF002634">
    <property type="entry name" value="PRK02304.1-3"/>
    <property type="match status" value="1"/>
</dbReference>
<dbReference type="NCBIfam" id="NF002636">
    <property type="entry name" value="PRK02304.1-5"/>
    <property type="match status" value="1"/>
</dbReference>
<dbReference type="PANTHER" id="PTHR32315">
    <property type="entry name" value="ADENINE PHOSPHORIBOSYLTRANSFERASE"/>
    <property type="match status" value="1"/>
</dbReference>
<dbReference type="PANTHER" id="PTHR32315:SF3">
    <property type="entry name" value="ADENINE PHOSPHORIBOSYLTRANSFERASE"/>
    <property type="match status" value="1"/>
</dbReference>
<dbReference type="Pfam" id="PF00156">
    <property type="entry name" value="Pribosyltran"/>
    <property type="match status" value="1"/>
</dbReference>
<dbReference type="SUPFAM" id="SSF53271">
    <property type="entry name" value="PRTase-like"/>
    <property type="match status" value="1"/>
</dbReference>
<dbReference type="PROSITE" id="PS00103">
    <property type="entry name" value="PUR_PYR_PR_TRANSFER"/>
    <property type="match status" value="1"/>
</dbReference>
<accession>B7KKQ8</accession>
<feature type="chain" id="PRO_1000116169" description="Adenine phosphoribosyltransferase">
    <location>
        <begin position="1"/>
        <end position="172"/>
    </location>
</feature>
<organism>
    <name type="scientific">Gloeothece citriformis (strain PCC 7424)</name>
    <name type="common">Cyanothece sp. (strain PCC 7424)</name>
    <dbReference type="NCBI Taxonomy" id="65393"/>
    <lineage>
        <taxon>Bacteria</taxon>
        <taxon>Bacillati</taxon>
        <taxon>Cyanobacteriota</taxon>
        <taxon>Cyanophyceae</taxon>
        <taxon>Oscillatoriophycideae</taxon>
        <taxon>Chroococcales</taxon>
        <taxon>Aphanothecaceae</taxon>
        <taxon>Gloeothece</taxon>
        <taxon>Gloeothece citriformis</taxon>
    </lineage>
</organism>
<sequence>MDIKSLIRNIPDFPKPGIVFRDITTLLGHPEGLRYTIDTLTQKCIELNLRPDYVIGMESRGFLFGVPLAYQLGAGFIPVRKPGKLPAAVHTIEYDLEYGSDKLEIHQDAVADHHRVLIVDDLIATGGTARATADLLAKIGCEVLGFAFIIELKDLGGRQKLPDLPIITLVDY</sequence>
<gene>
    <name evidence="1" type="primary">apt</name>
    <name type="ordered locus">PCC7424_2613</name>
</gene>